<accession>Q8VYJ1</accession>
<accession>Q9S9P7</accession>
<feature type="transit peptide" description="Chloroplast" evidence="1">
    <location>
        <begin position="1"/>
        <end position="15"/>
    </location>
</feature>
<feature type="chain" id="PRO_0000406984" description="2-succinylbenzoate--CoA ligase, chloroplastic/peroxisomal">
    <location>
        <begin position="16"/>
        <end position="560"/>
    </location>
</feature>
<feature type="transmembrane region" description="Helical" evidence="1">
    <location>
        <begin position="69"/>
        <end position="89"/>
    </location>
</feature>
<feature type="transmembrane region" description="Helical" evidence="1">
    <location>
        <begin position="189"/>
        <end position="209"/>
    </location>
</feature>
<feature type="transmembrane region" description="Helical" evidence="1">
    <location>
        <begin position="225"/>
        <end position="245"/>
    </location>
</feature>
<feature type="short sequence motif" description="Microbody targeting signal" evidence="1">
    <location>
        <begin position="558"/>
        <end position="560"/>
    </location>
</feature>
<keyword id="KW-0067">ATP-binding</keyword>
<keyword id="KW-0150">Chloroplast</keyword>
<keyword id="KW-0436">Ligase</keyword>
<keyword id="KW-0472">Membrane</keyword>
<keyword id="KW-0547">Nucleotide-binding</keyword>
<keyword id="KW-0576">Peroxisome</keyword>
<keyword id="KW-0934">Plastid</keyword>
<keyword id="KW-1185">Reference proteome</keyword>
<keyword id="KW-0809">Transit peptide</keyword>
<keyword id="KW-0812">Transmembrane</keyword>
<keyword id="KW-1133">Transmembrane helix</keyword>
<name>MENE_ARATH</name>
<evidence type="ECO:0000255" key="1"/>
<evidence type="ECO:0000269" key="2">
    <source>
    </source>
</evidence>
<evidence type="ECO:0000269" key="3">
    <source>
    </source>
</evidence>
<evidence type="ECO:0000305" key="4"/>
<gene>
    <name type="primary">AAE14</name>
    <name type="synonym">MENE</name>
    <name type="ordered locus">At1g30520</name>
    <name type="ORF">F26G16.14</name>
    <name type="ORF">F26G16.3</name>
</gene>
<proteinExistence type="evidence at protein level"/>
<dbReference type="EC" id="6.2.1.26"/>
<dbReference type="EMBL" id="AY250843">
    <property type="protein sequence ID" value="AAP03026.1"/>
    <property type="molecule type" value="mRNA"/>
</dbReference>
<dbReference type="EMBL" id="AC009917">
    <property type="protein sequence ID" value="AAF19755.1"/>
    <property type="status" value="ALT_SEQ"/>
    <property type="molecule type" value="Genomic_DNA"/>
</dbReference>
<dbReference type="EMBL" id="CP002684">
    <property type="protein sequence ID" value="AEE31239.1"/>
    <property type="molecule type" value="Genomic_DNA"/>
</dbReference>
<dbReference type="EMBL" id="CP002684">
    <property type="protein sequence ID" value="ANM60008.1"/>
    <property type="molecule type" value="Genomic_DNA"/>
</dbReference>
<dbReference type="EMBL" id="AY070739">
    <property type="protein sequence ID" value="AAL50080.1"/>
    <property type="molecule type" value="mRNA"/>
</dbReference>
<dbReference type="EMBL" id="BT010462">
    <property type="protein sequence ID" value="AAQ65085.1"/>
    <property type="molecule type" value="mRNA"/>
</dbReference>
<dbReference type="PIR" id="C86430">
    <property type="entry name" value="C86430"/>
</dbReference>
<dbReference type="RefSeq" id="NP_001322322.1">
    <property type="nucleotide sequence ID" value="NM_001332903.1"/>
</dbReference>
<dbReference type="RefSeq" id="NP_174340.2">
    <property type="nucleotide sequence ID" value="NM_102789.5"/>
</dbReference>
<dbReference type="SMR" id="Q8VYJ1"/>
<dbReference type="FunCoup" id="Q8VYJ1">
    <property type="interactions" value="990"/>
</dbReference>
<dbReference type="STRING" id="3702.Q8VYJ1"/>
<dbReference type="PaxDb" id="3702-AT1G30520.1"/>
<dbReference type="ProteomicsDB" id="238952"/>
<dbReference type="EnsemblPlants" id="AT1G30520.1">
    <property type="protein sequence ID" value="AT1G30520.1"/>
    <property type="gene ID" value="AT1G30520"/>
</dbReference>
<dbReference type="EnsemblPlants" id="AT1G30520.2">
    <property type="protein sequence ID" value="AT1G30520.2"/>
    <property type="gene ID" value="AT1G30520"/>
</dbReference>
<dbReference type="GeneID" id="839932"/>
<dbReference type="Gramene" id="AT1G30520.1">
    <property type="protein sequence ID" value="AT1G30520.1"/>
    <property type="gene ID" value="AT1G30520"/>
</dbReference>
<dbReference type="Gramene" id="AT1G30520.2">
    <property type="protein sequence ID" value="AT1G30520.2"/>
    <property type="gene ID" value="AT1G30520"/>
</dbReference>
<dbReference type="KEGG" id="ath:AT1G30520"/>
<dbReference type="Araport" id="AT1G30520"/>
<dbReference type="TAIR" id="AT1G30520">
    <property type="gene designation" value="AAE14"/>
</dbReference>
<dbReference type="eggNOG" id="KOG1177">
    <property type="taxonomic scope" value="Eukaryota"/>
</dbReference>
<dbReference type="HOGENOM" id="CLU_000022_59_7_1"/>
<dbReference type="InParanoid" id="Q8VYJ1"/>
<dbReference type="OMA" id="HVEIQIG"/>
<dbReference type="PhylomeDB" id="Q8VYJ1"/>
<dbReference type="BioCyc" id="ARA:AT1G30520-MONOMER"/>
<dbReference type="BRENDA" id="6.2.1.26">
    <property type="organism ID" value="399"/>
</dbReference>
<dbReference type="PRO" id="PR:Q8VYJ1"/>
<dbReference type="Proteomes" id="UP000006548">
    <property type="component" value="Chromosome 1"/>
</dbReference>
<dbReference type="ExpressionAtlas" id="Q8VYJ1">
    <property type="expression patterns" value="baseline and differential"/>
</dbReference>
<dbReference type="GO" id="GO:0009507">
    <property type="term" value="C:chloroplast"/>
    <property type="evidence" value="ECO:0000314"/>
    <property type="project" value="TAIR"/>
</dbReference>
<dbReference type="GO" id="GO:0031969">
    <property type="term" value="C:chloroplast membrane"/>
    <property type="evidence" value="ECO:0007669"/>
    <property type="project" value="UniProtKB-SubCell"/>
</dbReference>
<dbReference type="GO" id="GO:0005778">
    <property type="term" value="C:peroxisomal membrane"/>
    <property type="evidence" value="ECO:0007669"/>
    <property type="project" value="UniProtKB-SubCell"/>
</dbReference>
<dbReference type="GO" id="GO:0005777">
    <property type="term" value="C:peroxisome"/>
    <property type="evidence" value="ECO:0000314"/>
    <property type="project" value="UniProtKB"/>
</dbReference>
<dbReference type="GO" id="GO:0005524">
    <property type="term" value="F:ATP binding"/>
    <property type="evidence" value="ECO:0007669"/>
    <property type="project" value="UniProtKB-KW"/>
</dbReference>
<dbReference type="GO" id="GO:0008756">
    <property type="term" value="F:o-succinylbenzoate-CoA ligase activity"/>
    <property type="evidence" value="ECO:0007669"/>
    <property type="project" value="UniProtKB-EC"/>
</dbReference>
<dbReference type="GO" id="GO:0042372">
    <property type="term" value="P:phylloquinone biosynthetic process"/>
    <property type="evidence" value="ECO:0000315"/>
    <property type="project" value="TAIR"/>
</dbReference>
<dbReference type="CDD" id="cd04433">
    <property type="entry name" value="AFD_class_I"/>
    <property type="match status" value="1"/>
</dbReference>
<dbReference type="FunFam" id="3.40.50.12780:FF:000129">
    <property type="entry name" value="2-succinylbenzoate--CoA ligase, chloroplastic/peroxisomal"/>
    <property type="match status" value="1"/>
</dbReference>
<dbReference type="Gene3D" id="3.30.300.30">
    <property type="match status" value="1"/>
</dbReference>
<dbReference type="Gene3D" id="3.40.50.12780">
    <property type="entry name" value="N-terminal domain of ligase-like"/>
    <property type="match status" value="1"/>
</dbReference>
<dbReference type="InterPro" id="IPR025110">
    <property type="entry name" value="AMP-bd_C"/>
</dbReference>
<dbReference type="InterPro" id="IPR045851">
    <property type="entry name" value="AMP-bd_C_sf"/>
</dbReference>
<dbReference type="InterPro" id="IPR020845">
    <property type="entry name" value="AMP-binding_CS"/>
</dbReference>
<dbReference type="InterPro" id="IPR000873">
    <property type="entry name" value="AMP-dep_synth/lig_dom"/>
</dbReference>
<dbReference type="InterPro" id="IPR042099">
    <property type="entry name" value="ANL_N_sf"/>
</dbReference>
<dbReference type="PANTHER" id="PTHR43201:SF32">
    <property type="entry name" value="2-SUCCINYLBENZOATE--COA LIGASE, CHLOROPLASTIC_PEROXISOMAL"/>
    <property type="match status" value="1"/>
</dbReference>
<dbReference type="PANTHER" id="PTHR43201">
    <property type="entry name" value="ACYL-COA SYNTHETASE"/>
    <property type="match status" value="1"/>
</dbReference>
<dbReference type="Pfam" id="PF00501">
    <property type="entry name" value="AMP-binding"/>
    <property type="match status" value="1"/>
</dbReference>
<dbReference type="Pfam" id="PF13193">
    <property type="entry name" value="AMP-binding_C"/>
    <property type="match status" value="1"/>
</dbReference>
<dbReference type="SUPFAM" id="SSF56801">
    <property type="entry name" value="Acetyl-CoA synthetase-like"/>
    <property type="match status" value="1"/>
</dbReference>
<dbReference type="PROSITE" id="PS00455">
    <property type="entry name" value="AMP_BINDING"/>
    <property type="match status" value="1"/>
</dbReference>
<comment type="function">
    <text evidence="3">Involved in the biosynthesis of phylloquinone (vitamin K1). Converts 2-succinylbenzoate (OSB) to 2-succinylbenzoyl-CoA (OSB-CoA).</text>
</comment>
<comment type="catalytic activity">
    <reaction evidence="3">
        <text>2-succinylbenzoate + ATP + CoA = 2-succinylbenzoyl-CoA + AMP + diphosphate</text>
        <dbReference type="Rhea" id="RHEA:17009"/>
        <dbReference type="ChEBI" id="CHEBI:18325"/>
        <dbReference type="ChEBI" id="CHEBI:30616"/>
        <dbReference type="ChEBI" id="CHEBI:33019"/>
        <dbReference type="ChEBI" id="CHEBI:57287"/>
        <dbReference type="ChEBI" id="CHEBI:57364"/>
        <dbReference type="ChEBI" id="CHEBI:456215"/>
        <dbReference type="EC" id="6.2.1.26"/>
    </reaction>
</comment>
<comment type="subcellular location">
    <subcellularLocation>
        <location>Plastid</location>
        <location>Chloroplast membrane</location>
        <topology>Multi-pass membrane protein</topology>
    </subcellularLocation>
    <subcellularLocation>
        <location>Peroxisome membrane</location>
        <topology>Multi-pass membrane protein</topology>
    </subcellularLocation>
    <text>Accumulates in discrete foci within the chloroplast.</text>
</comment>
<comment type="tissue specificity">
    <text evidence="2 3">High expression in young leaves and flowers. Not expressed in roots.</text>
</comment>
<comment type="disruption phenotype">
    <text evidence="3">Lack of phylloquinone and seedling lethal.</text>
</comment>
<comment type="similarity">
    <text evidence="4">Belongs to the ATP-dependent AMP-binding enzyme family. MenE subfamily.</text>
</comment>
<comment type="sequence caution" evidence="4">
    <conflict type="erroneous gene model prediction">
        <sequence resource="EMBL-CDS" id="AAF19755"/>
    </conflict>
</comment>
<protein>
    <recommendedName>
        <fullName>2-succinylbenzoate--CoA ligase, chloroplastic/peroxisomal</fullName>
        <ecNumber>6.2.1.26</ecNumber>
    </recommendedName>
    <alternativeName>
        <fullName>Acyl-activating enzyme 14</fullName>
    </alternativeName>
    <alternativeName>
        <fullName>O-succinylbenzoyl-CoA ligase</fullName>
    </alternativeName>
</protein>
<sequence>MANHSRPHICQCLTRLASVKRNAVVTVYGNRKRTGREFVDGVLSLAAGLIRLGLRNGDVVSIAAFNSDLFLEWLLAVALVGGVVAPLNYRWSLKEAKMAMLLVEPVLLVTDETCVSWCIDVQNGDIPSLKWRVLMESTSTDFANELNQFLTTEMLKQRTLVPSLATYAWASDDAVVICFTSGTTGRPKGVTISHLAFITQSLAKIAIAGYGEDDVYLHTSPLVHIGGLSSAMAMLMVGACHVLLPKFDAKTALQVMEQNHITCFITVPAMMADLIRVNRTTKNGAENRGVRKILNGGGSLSSELLKEAVNIFPCARILSAYGMTEACSSLTFMTLHDPTQESFKVTYPLLNQPKQGTCVGKPAPHIELMVKLDEDSSRVGKILTRGPHTMLRYWGHQVAQENVETSESRSNEAWLDTGDIGAFDEFGNLWLIGRSNGRIKTGGENVYPEEVEAVLVEHPGIVSAVVIGVIDTRLGEMVVACVRLQEKWIWSDVENRKGSFQLSSETLKHHCRTQNLTGFKIPKRFVRWEKQFPLTTTGKVKRDEVRRQVLSHFQIMTSSL</sequence>
<organism>
    <name type="scientific">Arabidopsis thaliana</name>
    <name type="common">Mouse-ear cress</name>
    <dbReference type="NCBI Taxonomy" id="3702"/>
    <lineage>
        <taxon>Eukaryota</taxon>
        <taxon>Viridiplantae</taxon>
        <taxon>Streptophyta</taxon>
        <taxon>Embryophyta</taxon>
        <taxon>Tracheophyta</taxon>
        <taxon>Spermatophyta</taxon>
        <taxon>Magnoliopsida</taxon>
        <taxon>eudicotyledons</taxon>
        <taxon>Gunneridae</taxon>
        <taxon>Pentapetalae</taxon>
        <taxon>rosids</taxon>
        <taxon>malvids</taxon>
        <taxon>Brassicales</taxon>
        <taxon>Brassicaceae</taxon>
        <taxon>Camelineae</taxon>
        <taxon>Arabidopsis</taxon>
    </lineage>
</organism>
<reference key="1">
    <citation type="journal article" date="2003" name="Plant Physiol.">
        <title>Arabidopsis contains a large superfamily of acyl-activating enzymes. Phylogenetic and biochemical analysis reveals a new class of acyl-coenzyme a synthetases.</title>
        <authorList>
            <person name="Shockey J.M."/>
            <person name="Fulda M.S."/>
            <person name="Browse J."/>
        </authorList>
    </citation>
    <scope>NUCLEOTIDE SEQUENCE [MRNA]</scope>
    <scope>TISSUE SPECIFICITY</scope>
    <scope>GENE FAMILY</scope>
    <scope>NOMENCLATURE</scope>
</reference>
<reference key="2">
    <citation type="journal article" date="2000" name="Nature">
        <title>Sequence and analysis of chromosome 1 of the plant Arabidopsis thaliana.</title>
        <authorList>
            <person name="Theologis A."/>
            <person name="Ecker J.R."/>
            <person name="Palm C.J."/>
            <person name="Federspiel N.A."/>
            <person name="Kaul S."/>
            <person name="White O."/>
            <person name="Alonso J."/>
            <person name="Altafi H."/>
            <person name="Araujo R."/>
            <person name="Bowman C.L."/>
            <person name="Brooks S.Y."/>
            <person name="Buehler E."/>
            <person name="Chan A."/>
            <person name="Chao Q."/>
            <person name="Chen H."/>
            <person name="Cheuk R.F."/>
            <person name="Chin C.W."/>
            <person name="Chung M.K."/>
            <person name="Conn L."/>
            <person name="Conway A.B."/>
            <person name="Conway A.R."/>
            <person name="Creasy T.H."/>
            <person name="Dewar K."/>
            <person name="Dunn P."/>
            <person name="Etgu P."/>
            <person name="Feldblyum T.V."/>
            <person name="Feng J.-D."/>
            <person name="Fong B."/>
            <person name="Fujii C.Y."/>
            <person name="Gill J.E."/>
            <person name="Goldsmith A.D."/>
            <person name="Haas B."/>
            <person name="Hansen N.F."/>
            <person name="Hughes B."/>
            <person name="Huizar L."/>
            <person name="Hunter J.L."/>
            <person name="Jenkins J."/>
            <person name="Johnson-Hopson C."/>
            <person name="Khan S."/>
            <person name="Khaykin E."/>
            <person name="Kim C.J."/>
            <person name="Koo H.L."/>
            <person name="Kremenetskaia I."/>
            <person name="Kurtz D.B."/>
            <person name="Kwan A."/>
            <person name="Lam B."/>
            <person name="Langin-Hooper S."/>
            <person name="Lee A."/>
            <person name="Lee J.M."/>
            <person name="Lenz C.A."/>
            <person name="Li J.H."/>
            <person name="Li Y.-P."/>
            <person name="Lin X."/>
            <person name="Liu S.X."/>
            <person name="Liu Z.A."/>
            <person name="Luros J.S."/>
            <person name="Maiti R."/>
            <person name="Marziali A."/>
            <person name="Militscher J."/>
            <person name="Miranda M."/>
            <person name="Nguyen M."/>
            <person name="Nierman W.C."/>
            <person name="Osborne B.I."/>
            <person name="Pai G."/>
            <person name="Peterson J."/>
            <person name="Pham P.K."/>
            <person name="Rizzo M."/>
            <person name="Rooney T."/>
            <person name="Rowley D."/>
            <person name="Sakano H."/>
            <person name="Salzberg S.L."/>
            <person name="Schwartz J.R."/>
            <person name="Shinn P."/>
            <person name="Southwick A.M."/>
            <person name="Sun H."/>
            <person name="Tallon L.J."/>
            <person name="Tambunga G."/>
            <person name="Toriumi M.J."/>
            <person name="Town C.D."/>
            <person name="Utterback T."/>
            <person name="Van Aken S."/>
            <person name="Vaysberg M."/>
            <person name="Vysotskaia V.S."/>
            <person name="Walker M."/>
            <person name="Wu D."/>
            <person name="Yu G."/>
            <person name="Fraser C.M."/>
            <person name="Venter J.C."/>
            <person name="Davis R.W."/>
        </authorList>
    </citation>
    <scope>NUCLEOTIDE SEQUENCE [LARGE SCALE GENOMIC DNA]</scope>
    <source>
        <strain>cv. Columbia</strain>
    </source>
</reference>
<reference key="3">
    <citation type="journal article" date="2017" name="Plant J.">
        <title>Araport11: a complete reannotation of the Arabidopsis thaliana reference genome.</title>
        <authorList>
            <person name="Cheng C.Y."/>
            <person name="Krishnakumar V."/>
            <person name="Chan A.P."/>
            <person name="Thibaud-Nissen F."/>
            <person name="Schobel S."/>
            <person name="Town C.D."/>
        </authorList>
    </citation>
    <scope>GENOME REANNOTATION</scope>
    <source>
        <strain>cv. Columbia</strain>
    </source>
</reference>
<reference key="4">
    <citation type="journal article" date="2003" name="Science">
        <title>Empirical analysis of transcriptional activity in the Arabidopsis genome.</title>
        <authorList>
            <person name="Yamada K."/>
            <person name="Lim J."/>
            <person name="Dale J.M."/>
            <person name="Chen H."/>
            <person name="Shinn P."/>
            <person name="Palm C.J."/>
            <person name="Southwick A.M."/>
            <person name="Wu H.C."/>
            <person name="Kim C.J."/>
            <person name="Nguyen M."/>
            <person name="Pham P.K."/>
            <person name="Cheuk R.F."/>
            <person name="Karlin-Newmann G."/>
            <person name="Liu S.X."/>
            <person name="Lam B."/>
            <person name="Sakano H."/>
            <person name="Wu T."/>
            <person name="Yu G."/>
            <person name="Miranda M."/>
            <person name="Quach H.L."/>
            <person name="Tripp M."/>
            <person name="Chang C.H."/>
            <person name="Lee J.M."/>
            <person name="Toriumi M.J."/>
            <person name="Chan M.M."/>
            <person name="Tang C.C."/>
            <person name="Onodera C.S."/>
            <person name="Deng J.M."/>
            <person name="Akiyama K."/>
            <person name="Ansari Y."/>
            <person name="Arakawa T."/>
            <person name="Banh J."/>
            <person name="Banno F."/>
            <person name="Bowser L."/>
            <person name="Brooks S.Y."/>
            <person name="Carninci P."/>
            <person name="Chao Q."/>
            <person name="Choy N."/>
            <person name="Enju A."/>
            <person name="Goldsmith A.D."/>
            <person name="Gurjal M."/>
            <person name="Hansen N.F."/>
            <person name="Hayashizaki Y."/>
            <person name="Johnson-Hopson C."/>
            <person name="Hsuan V.W."/>
            <person name="Iida K."/>
            <person name="Karnes M."/>
            <person name="Khan S."/>
            <person name="Koesema E."/>
            <person name="Ishida J."/>
            <person name="Jiang P.X."/>
            <person name="Jones T."/>
            <person name="Kawai J."/>
            <person name="Kamiya A."/>
            <person name="Meyers C."/>
            <person name="Nakajima M."/>
            <person name="Narusaka M."/>
            <person name="Seki M."/>
            <person name="Sakurai T."/>
            <person name="Satou M."/>
            <person name="Tamse R."/>
            <person name="Vaysberg M."/>
            <person name="Wallender E.K."/>
            <person name="Wong C."/>
            <person name="Yamamura Y."/>
            <person name="Yuan S."/>
            <person name="Shinozaki K."/>
            <person name="Davis R.W."/>
            <person name="Theologis A."/>
            <person name="Ecker J.R."/>
        </authorList>
    </citation>
    <scope>NUCLEOTIDE SEQUENCE [LARGE SCALE MRNA]</scope>
    <source>
        <strain>cv. Columbia</strain>
    </source>
</reference>
<reference key="5">
    <citation type="journal article" date="2008" name="Plant J.">
        <title>The AAE14 gene encodes the Arabidopsis o-succinylbenzoyl-CoA ligase that is essential for phylloquinone synthesis and photosystem-I function.</title>
        <authorList>
            <person name="Kim H.U."/>
            <person name="van Oostende C."/>
            <person name="Basset G.J."/>
            <person name="Browse J."/>
        </authorList>
    </citation>
    <scope>FUNCTION</scope>
    <scope>CATALYTIC ACTIVITY</scope>
    <scope>SUBCELLULAR LOCATION</scope>
    <scope>TISSUE SPECIFICITY</scope>
    <scope>DISRUPTION PHENOTYPE</scope>
</reference>
<reference key="6">
    <citation type="journal article" date="2010" name="J. Exp. Bot.">
        <title>The proteome map of spinach leaf peroxisomes indicates partial compartmentalization of phylloquinone (vitamin K1) biosynthesis in plant peroxisomes.</title>
        <authorList>
            <person name="Babujee L."/>
            <person name="Wurtz V."/>
            <person name="Ma C."/>
            <person name="Lueder F."/>
            <person name="Soni P."/>
            <person name="van Dorsselaer A."/>
            <person name="Reumann S."/>
        </authorList>
    </citation>
    <scope>SUBCELLULAR LOCATION</scope>
</reference>